<comment type="function">
    <text evidence="1">Part of the ABC transporter complex BtuCDF involved in vitamin B12 import. Responsible for energy coupling to the transport system.</text>
</comment>
<comment type="catalytic activity">
    <reaction evidence="1">
        <text>an R-cob(III)alamin(out) + ATP + H2O = an R-cob(III)alamin(in) + ADP + phosphate + H(+)</text>
        <dbReference type="Rhea" id="RHEA:17873"/>
        <dbReference type="ChEBI" id="CHEBI:15377"/>
        <dbReference type="ChEBI" id="CHEBI:15378"/>
        <dbReference type="ChEBI" id="CHEBI:30616"/>
        <dbReference type="ChEBI" id="CHEBI:43474"/>
        <dbReference type="ChEBI" id="CHEBI:140785"/>
        <dbReference type="ChEBI" id="CHEBI:456216"/>
        <dbReference type="EC" id="7.6.2.8"/>
    </reaction>
</comment>
<comment type="subunit">
    <text evidence="1">The complex is composed of two ATP-binding proteins (BtuD), two transmembrane proteins (BtuC) and a solute-binding protein (BtuF).</text>
</comment>
<comment type="subcellular location">
    <subcellularLocation>
        <location evidence="1">Cell inner membrane</location>
        <topology evidence="1">Peripheral membrane protein</topology>
    </subcellularLocation>
</comment>
<comment type="similarity">
    <text evidence="1">Belongs to the ABC transporter superfamily. Vitamin B12 importer (TC 3.A.1.13.1) family.</text>
</comment>
<protein>
    <recommendedName>
        <fullName evidence="1">Vitamin B12 import ATP-binding protein BtuD</fullName>
        <ecNumber evidence="1">7.6.2.8</ecNumber>
    </recommendedName>
    <alternativeName>
        <fullName evidence="1">Vitamin B12-transporting ATPase</fullName>
    </alternativeName>
</protein>
<organism>
    <name type="scientific">Escherichia coli O127:H6 (strain E2348/69 / EPEC)</name>
    <dbReference type="NCBI Taxonomy" id="574521"/>
    <lineage>
        <taxon>Bacteria</taxon>
        <taxon>Pseudomonadati</taxon>
        <taxon>Pseudomonadota</taxon>
        <taxon>Gammaproteobacteria</taxon>
        <taxon>Enterobacterales</taxon>
        <taxon>Enterobacteriaceae</taxon>
        <taxon>Escherichia</taxon>
    </lineage>
</organism>
<sequence length="249" mass="27085">MSIVMQLQDVAESTRLGPLSGEVRAGEILHLVGPNGAGKSTLLARMAGMTSGKGSIQFAGQPLEAWSATKLALHRAYLSQQQTPPFAMPVWHYLTLHQHDKTRTELLNDVAGALALDDKLGRSTNQLSGGEWQRVRLAAVVLQITPQANPAGQLLLLDEPMNSLDVAQQSALDKILSALCQQGLAIVMSSHDLNHTLRHAHRAWLLKGGKMLASGRREEVLTPANLAQAYGMNFRRLDIEGHRMLISTI</sequence>
<gene>
    <name evidence="1" type="primary">btuD</name>
    <name type="ordered locus">E2348C_1794</name>
</gene>
<accession>B7US48</accession>
<reference key="1">
    <citation type="journal article" date="2009" name="J. Bacteriol.">
        <title>Complete genome sequence and comparative genome analysis of enteropathogenic Escherichia coli O127:H6 strain E2348/69.</title>
        <authorList>
            <person name="Iguchi A."/>
            <person name="Thomson N.R."/>
            <person name="Ogura Y."/>
            <person name="Saunders D."/>
            <person name="Ooka T."/>
            <person name="Henderson I.R."/>
            <person name="Harris D."/>
            <person name="Asadulghani M."/>
            <person name="Kurokawa K."/>
            <person name="Dean P."/>
            <person name="Kenny B."/>
            <person name="Quail M.A."/>
            <person name="Thurston S."/>
            <person name="Dougan G."/>
            <person name="Hayashi T."/>
            <person name="Parkhill J."/>
            <person name="Frankel G."/>
        </authorList>
    </citation>
    <scope>NUCLEOTIDE SEQUENCE [LARGE SCALE GENOMIC DNA]</scope>
    <source>
        <strain>E2348/69 / EPEC</strain>
    </source>
</reference>
<dbReference type="EC" id="7.6.2.8" evidence="1"/>
<dbReference type="EMBL" id="FM180568">
    <property type="protein sequence ID" value="CAS09342.1"/>
    <property type="molecule type" value="Genomic_DNA"/>
</dbReference>
<dbReference type="RefSeq" id="WP_000029464.1">
    <property type="nucleotide sequence ID" value="NC_011601.1"/>
</dbReference>
<dbReference type="SMR" id="B7US48"/>
<dbReference type="KEGG" id="ecg:E2348C_1794"/>
<dbReference type="HOGENOM" id="CLU_000604_1_11_6"/>
<dbReference type="Proteomes" id="UP000008205">
    <property type="component" value="Chromosome"/>
</dbReference>
<dbReference type="GO" id="GO:0005886">
    <property type="term" value="C:plasma membrane"/>
    <property type="evidence" value="ECO:0007669"/>
    <property type="project" value="UniProtKB-SubCell"/>
</dbReference>
<dbReference type="GO" id="GO:0015420">
    <property type="term" value="F:ABC-type vitamin B12 transporter activity"/>
    <property type="evidence" value="ECO:0007669"/>
    <property type="project" value="UniProtKB-UniRule"/>
</dbReference>
<dbReference type="GO" id="GO:0005524">
    <property type="term" value="F:ATP binding"/>
    <property type="evidence" value="ECO:0007669"/>
    <property type="project" value="UniProtKB-KW"/>
</dbReference>
<dbReference type="GO" id="GO:0016887">
    <property type="term" value="F:ATP hydrolysis activity"/>
    <property type="evidence" value="ECO:0007669"/>
    <property type="project" value="InterPro"/>
</dbReference>
<dbReference type="CDD" id="cd03214">
    <property type="entry name" value="ABC_Iron-Siderophores_B12_Hemin"/>
    <property type="match status" value="1"/>
</dbReference>
<dbReference type="FunFam" id="3.40.50.300:FF:000462">
    <property type="entry name" value="Vitamin B12 import ATP-binding protein BtuD"/>
    <property type="match status" value="1"/>
</dbReference>
<dbReference type="Gene3D" id="3.40.50.300">
    <property type="entry name" value="P-loop containing nucleotide triphosphate hydrolases"/>
    <property type="match status" value="1"/>
</dbReference>
<dbReference type="HAMAP" id="MF_01005">
    <property type="entry name" value="BtuD"/>
    <property type="match status" value="1"/>
</dbReference>
<dbReference type="InterPro" id="IPR003593">
    <property type="entry name" value="AAA+_ATPase"/>
</dbReference>
<dbReference type="InterPro" id="IPR003439">
    <property type="entry name" value="ABC_transporter-like_ATP-bd"/>
</dbReference>
<dbReference type="InterPro" id="IPR017871">
    <property type="entry name" value="ABC_transporter-like_CS"/>
</dbReference>
<dbReference type="InterPro" id="IPR023693">
    <property type="entry name" value="ABC_transptr_BtuD"/>
</dbReference>
<dbReference type="InterPro" id="IPR050153">
    <property type="entry name" value="Metal_Ion_Import_ABC"/>
</dbReference>
<dbReference type="InterPro" id="IPR027417">
    <property type="entry name" value="P-loop_NTPase"/>
</dbReference>
<dbReference type="NCBIfam" id="NF002981">
    <property type="entry name" value="PRK03695.1"/>
    <property type="match status" value="1"/>
</dbReference>
<dbReference type="PANTHER" id="PTHR42734">
    <property type="entry name" value="METAL TRANSPORT SYSTEM ATP-BINDING PROTEIN TM_0124-RELATED"/>
    <property type="match status" value="1"/>
</dbReference>
<dbReference type="PANTHER" id="PTHR42734:SF18">
    <property type="entry name" value="VITAMIN B12 IMPORT ATP-BINDING PROTEIN BTUD"/>
    <property type="match status" value="1"/>
</dbReference>
<dbReference type="Pfam" id="PF00005">
    <property type="entry name" value="ABC_tran"/>
    <property type="match status" value="1"/>
</dbReference>
<dbReference type="SMART" id="SM00382">
    <property type="entry name" value="AAA"/>
    <property type="match status" value="1"/>
</dbReference>
<dbReference type="SUPFAM" id="SSF52540">
    <property type="entry name" value="P-loop containing nucleoside triphosphate hydrolases"/>
    <property type="match status" value="1"/>
</dbReference>
<dbReference type="PROSITE" id="PS00211">
    <property type="entry name" value="ABC_TRANSPORTER_1"/>
    <property type="match status" value="1"/>
</dbReference>
<dbReference type="PROSITE" id="PS50893">
    <property type="entry name" value="ABC_TRANSPORTER_2"/>
    <property type="match status" value="1"/>
</dbReference>
<proteinExistence type="inferred from homology"/>
<keyword id="KW-0067">ATP-binding</keyword>
<keyword id="KW-0997">Cell inner membrane</keyword>
<keyword id="KW-1003">Cell membrane</keyword>
<keyword id="KW-0472">Membrane</keyword>
<keyword id="KW-0547">Nucleotide-binding</keyword>
<keyword id="KW-1185">Reference proteome</keyword>
<keyword id="KW-1278">Translocase</keyword>
<keyword id="KW-0813">Transport</keyword>
<feature type="chain" id="PRO_1000148793" description="Vitamin B12 import ATP-binding protein BtuD">
    <location>
        <begin position="1"/>
        <end position="249"/>
    </location>
</feature>
<feature type="domain" description="ABC transporter" evidence="1">
    <location>
        <begin position="1"/>
        <end position="233"/>
    </location>
</feature>
<feature type="binding site" evidence="1">
    <location>
        <begin position="33"/>
        <end position="40"/>
    </location>
    <ligand>
        <name>ATP</name>
        <dbReference type="ChEBI" id="CHEBI:30616"/>
    </ligand>
</feature>
<evidence type="ECO:0000255" key="1">
    <source>
        <dbReference type="HAMAP-Rule" id="MF_01005"/>
    </source>
</evidence>
<name>BTUD_ECO27</name>